<dbReference type="EC" id="4.3.2.10" evidence="1"/>
<dbReference type="EMBL" id="CP000758">
    <property type="protein sequence ID" value="ABS13556.1"/>
    <property type="molecule type" value="Genomic_DNA"/>
</dbReference>
<dbReference type="RefSeq" id="WP_012091057.1">
    <property type="nucleotide sequence ID" value="NC_009667.1"/>
</dbReference>
<dbReference type="SMR" id="A6WX52"/>
<dbReference type="STRING" id="439375.Oant_0834"/>
<dbReference type="KEGG" id="oan:Oant_0834"/>
<dbReference type="PATRIC" id="fig|439375.7.peg.879"/>
<dbReference type="eggNOG" id="COG0107">
    <property type="taxonomic scope" value="Bacteria"/>
</dbReference>
<dbReference type="HOGENOM" id="CLU_048577_4_0_5"/>
<dbReference type="PhylomeDB" id="A6WX52"/>
<dbReference type="UniPathway" id="UPA00031">
    <property type="reaction ID" value="UER00010"/>
</dbReference>
<dbReference type="Proteomes" id="UP000002301">
    <property type="component" value="Chromosome 1"/>
</dbReference>
<dbReference type="GO" id="GO:0005737">
    <property type="term" value="C:cytoplasm"/>
    <property type="evidence" value="ECO:0007669"/>
    <property type="project" value="UniProtKB-SubCell"/>
</dbReference>
<dbReference type="GO" id="GO:0000107">
    <property type="term" value="F:imidazoleglycerol-phosphate synthase activity"/>
    <property type="evidence" value="ECO:0007669"/>
    <property type="project" value="UniProtKB-UniRule"/>
</dbReference>
<dbReference type="GO" id="GO:0016829">
    <property type="term" value="F:lyase activity"/>
    <property type="evidence" value="ECO:0007669"/>
    <property type="project" value="UniProtKB-KW"/>
</dbReference>
<dbReference type="GO" id="GO:0000105">
    <property type="term" value="P:L-histidine biosynthetic process"/>
    <property type="evidence" value="ECO:0007669"/>
    <property type="project" value="UniProtKB-UniRule"/>
</dbReference>
<dbReference type="CDD" id="cd04731">
    <property type="entry name" value="HisF"/>
    <property type="match status" value="1"/>
</dbReference>
<dbReference type="FunFam" id="3.20.20.70:FF:000006">
    <property type="entry name" value="Imidazole glycerol phosphate synthase subunit HisF"/>
    <property type="match status" value="1"/>
</dbReference>
<dbReference type="Gene3D" id="3.20.20.70">
    <property type="entry name" value="Aldolase class I"/>
    <property type="match status" value="1"/>
</dbReference>
<dbReference type="HAMAP" id="MF_01013">
    <property type="entry name" value="HisF"/>
    <property type="match status" value="1"/>
</dbReference>
<dbReference type="InterPro" id="IPR013785">
    <property type="entry name" value="Aldolase_TIM"/>
</dbReference>
<dbReference type="InterPro" id="IPR006062">
    <property type="entry name" value="His_biosynth"/>
</dbReference>
<dbReference type="InterPro" id="IPR004651">
    <property type="entry name" value="HisF"/>
</dbReference>
<dbReference type="InterPro" id="IPR050064">
    <property type="entry name" value="IGPS_HisA/HisF"/>
</dbReference>
<dbReference type="InterPro" id="IPR011060">
    <property type="entry name" value="RibuloseP-bd_barrel"/>
</dbReference>
<dbReference type="NCBIfam" id="TIGR00735">
    <property type="entry name" value="hisF"/>
    <property type="match status" value="1"/>
</dbReference>
<dbReference type="PANTHER" id="PTHR21235:SF2">
    <property type="entry name" value="IMIDAZOLE GLYCEROL PHOSPHATE SYNTHASE HISHF"/>
    <property type="match status" value="1"/>
</dbReference>
<dbReference type="PANTHER" id="PTHR21235">
    <property type="entry name" value="IMIDAZOLE GLYCEROL PHOSPHATE SYNTHASE SUBUNIT HISF/H IGP SYNTHASE SUBUNIT HISF/H"/>
    <property type="match status" value="1"/>
</dbReference>
<dbReference type="Pfam" id="PF00977">
    <property type="entry name" value="His_biosynth"/>
    <property type="match status" value="1"/>
</dbReference>
<dbReference type="SUPFAM" id="SSF51366">
    <property type="entry name" value="Ribulose-phoshate binding barrel"/>
    <property type="match status" value="1"/>
</dbReference>
<feature type="chain" id="PRO_1000063106" description="Imidazole glycerol phosphate synthase subunit HisF">
    <location>
        <begin position="1"/>
        <end position="261"/>
    </location>
</feature>
<feature type="active site" evidence="1">
    <location>
        <position position="12"/>
    </location>
</feature>
<feature type="active site" evidence="1">
    <location>
        <position position="131"/>
    </location>
</feature>
<gene>
    <name evidence="1" type="primary">hisF</name>
    <name type="ordered locus">Oant_0834</name>
</gene>
<evidence type="ECO:0000255" key="1">
    <source>
        <dbReference type="HAMAP-Rule" id="MF_01013"/>
    </source>
</evidence>
<organism>
    <name type="scientific">Brucella anthropi (strain ATCC 49188 / DSM 6882 / CCUG 24695 / JCM 21032 / LMG 3331 / NBRC 15819 / NCTC 12168 / Alc 37)</name>
    <name type="common">Ochrobactrum anthropi</name>
    <dbReference type="NCBI Taxonomy" id="439375"/>
    <lineage>
        <taxon>Bacteria</taxon>
        <taxon>Pseudomonadati</taxon>
        <taxon>Pseudomonadota</taxon>
        <taxon>Alphaproteobacteria</taxon>
        <taxon>Hyphomicrobiales</taxon>
        <taxon>Brucellaceae</taxon>
        <taxon>Brucella/Ochrobactrum group</taxon>
        <taxon>Brucella</taxon>
    </lineage>
</organism>
<reference key="1">
    <citation type="journal article" date="2011" name="J. Bacteriol.">
        <title>Genome of Ochrobactrum anthropi ATCC 49188 T, a versatile opportunistic pathogen and symbiont of several eukaryotic hosts.</title>
        <authorList>
            <person name="Chain P.S."/>
            <person name="Lang D.M."/>
            <person name="Comerci D.J."/>
            <person name="Malfatti S.A."/>
            <person name="Vergez L.M."/>
            <person name="Shin M."/>
            <person name="Ugalde R.A."/>
            <person name="Garcia E."/>
            <person name="Tolmasky M.E."/>
        </authorList>
    </citation>
    <scope>NUCLEOTIDE SEQUENCE [LARGE SCALE GENOMIC DNA]</scope>
    <source>
        <strain>ATCC 49188 / DSM 6882 / CCUG 24695 / JCM 21032 / LMG 3331 / NBRC 15819 / NCTC 12168 / Alc 37</strain>
    </source>
</reference>
<name>HIS6_BRUA4</name>
<keyword id="KW-0028">Amino-acid biosynthesis</keyword>
<keyword id="KW-0963">Cytoplasm</keyword>
<keyword id="KW-0368">Histidine biosynthesis</keyword>
<keyword id="KW-0456">Lyase</keyword>
<keyword id="KW-1185">Reference proteome</keyword>
<sequence>MTLKARVIPCLDVKDGRVVKGVNFVDLIDAGDPVEAARAYDAAGADELCFLDITASSDNRETIFDVIARTAEQCFMPLTVGGGVRQVSDIRKLLLAGADKVSINTAAVKNPEFVAEAADKFGDQCIVVAIDAKKVSGEGEADRWEIFTHGGRQTTGIDAVEFAQKVVSLGAGEILLTSMDRDGTKAGYDVALTRAVADSVRVPVIASGGVGNLDHMVAGIRDGHATAVLAASIFHFGTYTIGEAKRYMAEAGIPMRLDPVR</sequence>
<protein>
    <recommendedName>
        <fullName evidence="1">Imidazole glycerol phosphate synthase subunit HisF</fullName>
        <ecNumber evidence="1">4.3.2.10</ecNumber>
    </recommendedName>
    <alternativeName>
        <fullName evidence="1">IGP synthase cyclase subunit</fullName>
    </alternativeName>
    <alternativeName>
        <fullName evidence="1">IGP synthase subunit HisF</fullName>
    </alternativeName>
    <alternativeName>
        <fullName evidence="1">ImGP synthase subunit HisF</fullName>
        <shortName evidence="1">IGPS subunit HisF</shortName>
    </alternativeName>
</protein>
<comment type="function">
    <text evidence="1">IGPS catalyzes the conversion of PRFAR and glutamine to IGP, AICAR and glutamate. The HisF subunit catalyzes the cyclization activity that produces IGP and AICAR from PRFAR using the ammonia provided by the HisH subunit.</text>
</comment>
<comment type="catalytic activity">
    <reaction evidence="1">
        <text>5-[(5-phospho-1-deoxy-D-ribulos-1-ylimino)methylamino]-1-(5-phospho-beta-D-ribosyl)imidazole-4-carboxamide + L-glutamine = D-erythro-1-(imidazol-4-yl)glycerol 3-phosphate + 5-amino-1-(5-phospho-beta-D-ribosyl)imidazole-4-carboxamide + L-glutamate + H(+)</text>
        <dbReference type="Rhea" id="RHEA:24793"/>
        <dbReference type="ChEBI" id="CHEBI:15378"/>
        <dbReference type="ChEBI" id="CHEBI:29985"/>
        <dbReference type="ChEBI" id="CHEBI:58278"/>
        <dbReference type="ChEBI" id="CHEBI:58359"/>
        <dbReference type="ChEBI" id="CHEBI:58475"/>
        <dbReference type="ChEBI" id="CHEBI:58525"/>
        <dbReference type="EC" id="4.3.2.10"/>
    </reaction>
</comment>
<comment type="pathway">
    <text evidence="1">Amino-acid biosynthesis; L-histidine biosynthesis; L-histidine from 5-phospho-alpha-D-ribose 1-diphosphate: step 5/9.</text>
</comment>
<comment type="subunit">
    <text evidence="1">Heterodimer of HisH and HisF.</text>
</comment>
<comment type="subcellular location">
    <subcellularLocation>
        <location evidence="1">Cytoplasm</location>
    </subcellularLocation>
</comment>
<comment type="similarity">
    <text evidence="1">Belongs to the HisA/HisF family.</text>
</comment>
<accession>A6WX52</accession>
<proteinExistence type="inferred from homology"/>